<accession>C3LFK4</accession>
<evidence type="ECO:0000255" key="1">
    <source>
        <dbReference type="HAMAP-Rule" id="MF_00124"/>
    </source>
</evidence>
<sequence>MYLINQNGWIEVICGSMFSGKSEELIRRVRRTQFAKQHAIVFKPCIDNRYSEEDVVSHNGLKVKAVPVSASKDIFKHITEEMDVIAIDEVQFFDGDIVEVVQVLANRGYRVIVAGLDQDFRGLPFGQVPQLMAIAEHVTKLQAVCSACGSPASRTQRLIDGEPAAFDDPIILVGASESYEPRCRHCHAVPTKQR</sequence>
<organism>
    <name type="scientific">Bacillus anthracis (strain CDC 684 / NRRL 3495)</name>
    <dbReference type="NCBI Taxonomy" id="568206"/>
    <lineage>
        <taxon>Bacteria</taxon>
        <taxon>Bacillati</taxon>
        <taxon>Bacillota</taxon>
        <taxon>Bacilli</taxon>
        <taxon>Bacillales</taxon>
        <taxon>Bacillaceae</taxon>
        <taxon>Bacillus</taxon>
        <taxon>Bacillus cereus group</taxon>
    </lineage>
</organism>
<feature type="chain" id="PRO_1000122650" description="Thymidine kinase">
    <location>
        <begin position="1"/>
        <end position="194"/>
    </location>
</feature>
<feature type="active site" description="Proton acceptor" evidence="1">
    <location>
        <position position="89"/>
    </location>
</feature>
<feature type="binding site" evidence="1">
    <location>
        <begin position="15"/>
        <end position="22"/>
    </location>
    <ligand>
        <name>ATP</name>
        <dbReference type="ChEBI" id="CHEBI:30616"/>
    </ligand>
</feature>
<feature type="binding site" evidence="1">
    <location>
        <begin position="88"/>
        <end position="91"/>
    </location>
    <ligand>
        <name>ATP</name>
        <dbReference type="ChEBI" id="CHEBI:30616"/>
    </ligand>
</feature>
<feature type="binding site" evidence="1">
    <location>
        <position position="145"/>
    </location>
    <ligand>
        <name>Zn(2+)</name>
        <dbReference type="ChEBI" id="CHEBI:29105"/>
    </ligand>
</feature>
<feature type="binding site" evidence="1">
    <location>
        <position position="148"/>
    </location>
    <ligand>
        <name>Zn(2+)</name>
        <dbReference type="ChEBI" id="CHEBI:29105"/>
    </ligand>
</feature>
<feature type="binding site" evidence="1">
    <location>
        <position position="183"/>
    </location>
    <ligand>
        <name>Zn(2+)</name>
        <dbReference type="ChEBI" id="CHEBI:29105"/>
    </ligand>
</feature>
<feature type="binding site" evidence="1">
    <location>
        <position position="186"/>
    </location>
    <ligand>
        <name>Zn(2+)</name>
        <dbReference type="ChEBI" id="CHEBI:29105"/>
    </ligand>
</feature>
<comment type="catalytic activity">
    <reaction evidence="1">
        <text>thymidine + ATP = dTMP + ADP + H(+)</text>
        <dbReference type="Rhea" id="RHEA:19129"/>
        <dbReference type="ChEBI" id="CHEBI:15378"/>
        <dbReference type="ChEBI" id="CHEBI:17748"/>
        <dbReference type="ChEBI" id="CHEBI:30616"/>
        <dbReference type="ChEBI" id="CHEBI:63528"/>
        <dbReference type="ChEBI" id="CHEBI:456216"/>
        <dbReference type="EC" id="2.7.1.21"/>
    </reaction>
</comment>
<comment type="subunit">
    <text evidence="1">Homotetramer.</text>
</comment>
<comment type="subcellular location">
    <subcellularLocation>
        <location evidence="1">Cytoplasm</location>
    </subcellularLocation>
</comment>
<comment type="similarity">
    <text evidence="1">Belongs to the thymidine kinase family.</text>
</comment>
<keyword id="KW-0067">ATP-binding</keyword>
<keyword id="KW-0963">Cytoplasm</keyword>
<keyword id="KW-0237">DNA synthesis</keyword>
<keyword id="KW-0418">Kinase</keyword>
<keyword id="KW-0479">Metal-binding</keyword>
<keyword id="KW-0547">Nucleotide-binding</keyword>
<keyword id="KW-0808">Transferase</keyword>
<keyword id="KW-0862">Zinc</keyword>
<name>KITH_BACAC</name>
<protein>
    <recommendedName>
        <fullName evidence="1">Thymidine kinase</fullName>
        <ecNumber evidence="1">2.7.1.21</ecNumber>
    </recommendedName>
</protein>
<reference key="1">
    <citation type="submission" date="2008-10" db="EMBL/GenBank/DDBJ databases">
        <title>Genome sequence of Bacillus anthracis str. CDC 684.</title>
        <authorList>
            <person name="Dodson R.J."/>
            <person name="Munk A.C."/>
            <person name="Brettin T."/>
            <person name="Bruce D."/>
            <person name="Detter C."/>
            <person name="Tapia R."/>
            <person name="Han C."/>
            <person name="Sutton G."/>
            <person name="Sims D."/>
        </authorList>
    </citation>
    <scope>NUCLEOTIDE SEQUENCE [LARGE SCALE GENOMIC DNA]</scope>
    <source>
        <strain>CDC 684 / NRRL 3495</strain>
    </source>
</reference>
<proteinExistence type="inferred from homology"/>
<dbReference type="EC" id="2.7.1.21" evidence="1"/>
<dbReference type="EMBL" id="CP001215">
    <property type="protein sequence ID" value="ACP16369.1"/>
    <property type="molecule type" value="Genomic_DNA"/>
</dbReference>
<dbReference type="RefSeq" id="WP_000280866.1">
    <property type="nucleotide sequence ID" value="NC_012581.1"/>
</dbReference>
<dbReference type="SMR" id="C3LFK4"/>
<dbReference type="KEGG" id="bah:BAMEG_5619"/>
<dbReference type="HOGENOM" id="CLU_064400_3_0_9"/>
<dbReference type="GO" id="GO:0005829">
    <property type="term" value="C:cytosol"/>
    <property type="evidence" value="ECO:0007669"/>
    <property type="project" value="TreeGrafter"/>
</dbReference>
<dbReference type="GO" id="GO:0005524">
    <property type="term" value="F:ATP binding"/>
    <property type="evidence" value="ECO:0007669"/>
    <property type="project" value="UniProtKB-UniRule"/>
</dbReference>
<dbReference type="GO" id="GO:0004797">
    <property type="term" value="F:thymidine kinase activity"/>
    <property type="evidence" value="ECO:0007669"/>
    <property type="project" value="UniProtKB-UniRule"/>
</dbReference>
<dbReference type="GO" id="GO:0008270">
    <property type="term" value="F:zinc ion binding"/>
    <property type="evidence" value="ECO:0007669"/>
    <property type="project" value="UniProtKB-UniRule"/>
</dbReference>
<dbReference type="GO" id="GO:0071897">
    <property type="term" value="P:DNA biosynthetic process"/>
    <property type="evidence" value="ECO:0007669"/>
    <property type="project" value="UniProtKB-KW"/>
</dbReference>
<dbReference type="GO" id="GO:0046104">
    <property type="term" value="P:thymidine metabolic process"/>
    <property type="evidence" value="ECO:0007669"/>
    <property type="project" value="TreeGrafter"/>
</dbReference>
<dbReference type="FunFam" id="3.30.60.20:FF:000026">
    <property type="entry name" value="Thymidine kinase"/>
    <property type="match status" value="1"/>
</dbReference>
<dbReference type="FunFam" id="3.40.50.300:FF:000384">
    <property type="entry name" value="Thymidine kinase"/>
    <property type="match status" value="1"/>
</dbReference>
<dbReference type="Gene3D" id="3.30.60.20">
    <property type="match status" value="1"/>
</dbReference>
<dbReference type="Gene3D" id="3.40.50.300">
    <property type="entry name" value="P-loop containing nucleotide triphosphate hydrolases"/>
    <property type="match status" value="1"/>
</dbReference>
<dbReference type="HAMAP" id="MF_00124">
    <property type="entry name" value="Thymidine_kinase"/>
    <property type="match status" value="1"/>
</dbReference>
<dbReference type="InterPro" id="IPR027417">
    <property type="entry name" value="P-loop_NTPase"/>
</dbReference>
<dbReference type="InterPro" id="IPR001267">
    <property type="entry name" value="Thymidine_kinase"/>
</dbReference>
<dbReference type="InterPro" id="IPR020633">
    <property type="entry name" value="Thymidine_kinase_CS"/>
</dbReference>
<dbReference type="NCBIfam" id="NF003296">
    <property type="entry name" value="PRK04296.1-1"/>
    <property type="match status" value="1"/>
</dbReference>
<dbReference type="PANTHER" id="PTHR11441">
    <property type="entry name" value="THYMIDINE KINASE"/>
    <property type="match status" value="1"/>
</dbReference>
<dbReference type="PANTHER" id="PTHR11441:SF0">
    <property type="entry name" value="THYMIDINE KINASE, CYTOSOLIC"/>
    <property type="match status" value="1"/>
</dbReference>
<dbReference type="Pfam" id="PF00265">
    <property type="entry name" value="TK"/>
    <property type="match status" value="1"/>
</dbReference>
<dbReference type="PIRSF" id="PIRSF035805">
    <property type="entry name" value="TK_cell"/>
    <property type="match status" value="1"/>
</dbReference>
<dbReference type="SUPFAM" id="SSF57716">
    <property type="entry name" value="Glucocorticoid receptor-like (DNA-binding domain)"/>
    <property type="match status" value="1"/>
</dbReference>
<dbReference type="SUPFAM" id="SSF52540">
    <property type="entry name" value="P-loop containing nucleoside triphosphate hydrolases"/>
    <property type="match status" value="1"/>
</dbReference>
<dbReference type="PROSITE" id="PS00603">
    <property type="entry name" value="TK_CELLULAR_TYPE"/>
    <property type="match status" value="1"/>
</dbReference>
<gene>
    <name evidence="1" type="primary">tdk</name>
    <name type="ordered locus">BAMEG_5619</name>
</gene>